<sequence>MAPPLSPGSRVLIALIRVYQRLISPLLGPHCRFTPTCSSYGIEALRRFGVIKGSWLTVKRVLKCHPLHPGGDDPVPPGPFDTREH</sequence>
<gene>
    <name evidence="1" type="primary">yidD</name>
    <name type="ordered locus">ECS88_4128</name>
</gene>
<accession>B7MGC6</accession>
<name>YIDD_ECO45</name>
<dbReference type="EMBL" id="CU928161">
    <property type="protein sequence ID" value="CAR05334.1"/>
    <property type="molecule type" value="Genomic_DNA"/>
</dbReference>
<dbReference type="RefSeq" id="WP_001307474.1">
    <property type="nucleotide sequence ID" value="NC_011742.1"/>
</dbReference>
<dbReference type="GeneID" id="97443257"/>
<dbReference type="KEGG" id="ecz:ECS88_4128"/>
<dbReference type="HOGENOM" id="CLU_144811_5_2_6"/>
<dbReference type="Proteomes" id="UP000000747">
    <property type="component" value="Chromosome"/>
</dbReference>
<dbReference type="GO" id="GO:0005886">
    <property type="term" value="C:plasma membrane"/>
    <property type="evidence" value="ECO:0007669"/>
    <property type="project" value="UniProtKB-SubCell"/>
</dbReference>
<dbReference type="HAMAP" id="MF_00386">
    <property type="entry name" value="UPF0161_YidD"/>
    <property type="match status" value="1"/>
</dbReference>
<dbReference type="InterPro" id="IPR002696">
    <property type="entry name" value="Membr_insert_effic_factor_YidD"/>
</dbReference>
<dbReference type="NCBIfam" id="TIGR00278">
    <property type="entry name" value="membrane protein insertion efficiency factor YidD"/>
    <property type="match status" value="1"/>
</dbReference>
<dbReference type="PANTHER" id="PTHR33383">
    <property type="entry name" value="MEMBRANE PROTEIN INSERTION EFFICIENCY FACTOR-RELATED"/>
    <property type="match status" value="1"/>
</dbReference>
<dbReference type="PANTHER" id="PTHR33383:SF1">
    <property type="entry name" value="MEMBRANE PROTEIN INSERTION EFFICIENCY FACTOR-RELATED"/>
    <property type="match status" value="1"/>
</dbReference>
<dbReference type="Pfam" id="PF01809">
    <property type="entry name" value="YidD"/>
    <property type="match status" value="1"/>
</dbReference>
<dbReference type="SMART" id="SM01234">
    <property type="entry name" value="Haemolytic"/>
    <property type="match status" value="1"/>
</dbReference>
<protein>
    <recommendedName>
        <fullName evidence="1">Putative membrane protein insertion efficiency factor</fullName>
    </recommendedName>
</protein>
<evidence type="ECO:0000255" key="1">
    <source>
        <dbReference type="HAMAP-Rule" id="MF_00386"/>
    </source>
</evidence>
<keyword id="KW-0997">Cell inner membrane</keyword>
<keyword id="KW-1003">Cell membrane</keyword>
<keyword id="KW-0472">Membrane</keyword>
<keyword id="KW-1185">Reference proteome</keyword>
<organism>
    <name type="scientific">Escherichia coli O45:K1 (strain S88 / ExPEC)</name>
    <dbReference type="NCBI Taxonomy" id="585035"/>
    <lineage>
        <taxon>Bacteria</taxon>
        <taxon>Pseudomonadati</taxon>
        <taxon>Pseudomonadota</taxon>
        <taxon>Gammaproteobacteria</taxon>
        <taxon>Enterobacterales</taxon>
        <taxon>Enterobacteriaceae</taxon>
        <taxon>Escherichia</taxon>
    </lineage>
</organism>
<feature type="chain" id="PRO_1000122637" description="Putative membrane protein insertion efficiency factor">
    <location>
        <begin position="1"/>
        <end position="85"/>
    </location>
</feature>
<reference key="1">
    <citation type="journal article" date="2009" name="PLoS Genet.">
        <title>Organised genome dynamics in the Escherichia coli species results in highly diverse adaptive paths.</title>
        <authorList>
            <person name="Touchon M."/>
            <person name="Hoede C."/>
            <person name="Tenaillon O."/>
            <person name="Barbe V."/>
            <person name="Baeriswyl S."/>
            <person name="Bidet P."/>
            <person name="Bingen E."/>
            <person name="Bonacorsi S."/>
            <person name="Bouchier C."/>
            <person name="Bouvet O."/>
            <person name="Calteau A."/>
            <person name="Chiapello H."/>
            <person name="Clermont O."/>
            <person name="Cruveiller S."/>
            <person name="Danchin A."/>
            <person name="Diard M."/>
            <person name="Dossat C."/>
            <person name="Karoui M.E."/>
            <person name="Frapy E."/>
            <person name="Garry L."/>
            <person name="Ghigo J.M."/>
            <person name="Gilles A.M."/>
            <person name="Johnson J."/>
            <person name="Le Bouguenec C."/>
            <person name="Lescat M."/>
            <person name="Mangenot S."/>
            <person name="Martinez-Jehanne V."/>
            <person name="Matic I."/>
            <person name="Nassif X."/>
            <person name="Oztas S."/>
            <person name="Petit M.A."/>
            <person name="Pichon C."/>
            <person name="Rouy Z."/>
            <person name="Ruf C.S."/>
            <person name="Schneider D."/>
            <person name="Tourret J."/>
            <person name="Vacherie B."/>
            <person name="Vallenet D."/>
            <person name="Medigue C."/>
            <person name="Rocha E.P.C."/>
            <person name="Denamur E."/>
        </authorList>
    </citation>
    <scope>NUCLEOTIDE SEQUENCE [LARGE SCALE GENOMIC DNA]</scope>
    <source>
        <strain>S88 / ExPEC</strain>
    </source>
</reference>
<proteinExistence type="inferred from homology"/>
<comment type="function">
    <text evidence="1">Could be involved in insertion of integral membrane proteins into the membrane.</text>
</comment>
<comment type="subcellular location">
    <subcellularLocation>
        <location evidence="1">Cell inner membrane</location>
        <topology evidence="1">Peripheral membrane protein</topology>
        <orientation evidence="1">Cytoplasmic side</orientation>
    </subcellularLocation>
</comment>
<comment type="similarity">
    <text evidence="1">Belongs to the UPF0161 family.</text>
</comment>